<sequence length="186" mass="20727">MPSFTQPHSAPRNFQFPGQQRQGDPTMGTINAELADKGFLVTSTDELITWARTGSLMWMTFGLACCAIEMMQMSMPRYDIERFGVAPRASPRQSDLMIVAGTLCNKMAPALRKVYDQMPEPRYVISMGSCANGGGYYHYSYSVVRGCDRVVPVDIYVPGCPPTAEALLYGILLLQRKIRRNGSIER</sequence>
<name>NUOB2_RHIEC</name>
<protein>
    <recommendedName>
        <fullName evidence="1">NADH-quinone oxidoreductase subunit B 2</fullName>
        <ecNumber evidence="1">7.1.1.-</ecNumber>
    </recommendedName>
    <alternativeName>
        <fullName evidence="1">NADH dehydrogenase I subunit B 2</fullName>
    </alternativeName>
    <alternativeName>
        <fullName evidence="1">NDH-1 subunit B 2</fullName>
    </alternativeName>
</protein>
<gene>
    <name evidence="1" type="primary">nuoB2</name>
    <name type="ordered locus">RHE_CH02557</name>
</gene>
<evidence type="ECO:0000255" key="1">
    <source>
        <dbReference type="HAMAP-Rule" id="MF_01356"/>
    </source>
</evidence>
<evidence type="ECO:0000256" key="2">
    <source>
        <dbReference type="SAM" id="MobiDB-lite"/>
    </source>
</evidence>
<proteinExistence type="inferred from homology"/>
<accession>Q2K755</accession>
<feature type="chain" id="PRO_0000376325" description="NADH-quinone oxidoreductase subunit B 2">
    <location>
        <begin position="1"/>
        <end position="186"/>
    </location>
</feature>
<feature type="region of interest" description="Disordered" evidence="2">
    <location>
        <begin position="1"/>
        <end position="27"/>
    </location>
</feature>
<feature type="binding site" evidence="1">
    <location>
        <position position="65"/>
    </location>
    <ligand>
        <name>[4Fe-4S] cluster</name>
        <dbReference type="ChEBI" id="CHEBI:49883"/>
    </ligand>
</feature>
<feature type="binding site" evidence="1">
    <location>
        <position position="66"/>
    </location>
    <ligand>
        <name>[4Fe-4S] cluster</name>
        <dbReference type="ChEBI" id="CHEBI:49883"/>
    </ligand>
</feature>
<feature type="binding site" evidence="1">
    <location>
        <position position="130"/>
    </location>
    <ligand>
        <name>[4Fe-4S] cluster</name>
        <dbReference type="ChEBI" id="CHEBI:49883"/>
    </ligand>
</feature>
<feature type="binding site" evidence="1">
    <location>
        <position position="160"/>
    </location>
    <ligand>
        <name>[4Fe-4S] cluster</name>
        <dbReference type="ChEBI" id="CHEBI:49883"/>
    </ligand>
</feature>
<keyword id="KW-0004">4Fe-4S</keyword>
<keyword id="KW-0997">Cell inner membrane</keyword>
<keyword id="KW-1003">Cell membrane</keyword>
<keyword id="KW-0408">Iron</keyword>
<keyword id="KW-0411">Iron-sulfur</keyword>
<keyword id="KW-0472">Membrane</keyword>
<keyword id="KW-0479">Metal-binding</keyword>
<keyword id="KW-0520">NAD</keyword>
<keyword id="KW-0874">Quinone</keyword>
<keyword id="KW-1185">Reference proteome</keyword>
<keyword id="KW-1278">Translocase</keyword>
<keyword id="KW-0813">Transport</keyword>
<keyword id="KW-0830">Ubiquinone</keyword>
<reference key="1">
    <citation type="journal article" date="2006" name="Proc. Natl. Acad. Sci. U.S.A.">
        <title>The partitioned Rhizobium etli genome: genetic and metabolic redundancy in seven interacting replicons.</title>
        <authorList>
            <person name="Gonzalez V."/>
            <person name="Santamaria R.I."/>
            <person name="Bustos P."/>
            <person name="Hernandez-Gonzalez I."/>
            <person name="Medrano-Soto A."/>
            <person name="Moreno-Hagelsieb G."/>
            <person name="Janga S.C."/>
            <person name="Ramirez M.A."/>
            <person name="Jimenez-Jacinto V."/>
            <person name="Collado-Vides J."/>
            <person name="Davila G."/>
        </authorList>
    </citation>
    <scope>NUCLEOTIDE SEQUENCE [LARGE SCALE GENOMIC DNA]</scope>
    <source>
        <strain>ATCC 51251 / DSM 11541 / JCM 21823 / NBRC 15573 / CFN 42</strain>
    </source>
</reference>
<comment type="function">
    <text evidence="1">NDH-1 shuttles electrons from NADH, via FMN and iron-sulfur (Fe-S) centers, to quinones in the respiratory chain. The immediate electron acceptor for the enzyme in this species is believed to be ubiquinone. Couples the redox reaction to proton translocation (for every two electrons transferred, four hydrogen ions are translocated across the cytoplasmic membrane), and thus conserves the redox energy in a proton gradient.</text>
</comment>
<comment type="catalytic activity">
    <reaction evidence="1">
        <text>a quinone + NADH + 5 H(+)(in) = a quinol + NAD(+) + 4 H(+)(out)</text>
        <dbReference type="Rhea" id="RHEA:57888"/>
        <dbReference type="ChEBI" id="CHEBI:15378"/>
        <dbReference type="ChEBI" id="CHEBI:24646"/>
        <dbReference type="ChEBI" id="CHEBI:57540"/>
        <dbReference type="ChEBI" id="CHEBI:57945"/>
        <dbReference type="ChEBI" id="CHEBI:132124"/>
    </reaction>
</comment>
<comment type="cofactor">
    <cofactor evidence="1">
        <name>[4Fe-4S] cluster</name>
        <dbReference type="ChEBI" id="CHEBI:49883"/>
    </cofactor>
    <text evidence="1">Binds 1 [4Fe-4S] cluster.</text>
</comment>
<comment type="subunit">
    <text evidence="1">NDH-1 is composed of 14 different subunits. Subunits NuoB, C, D, E, F, and G constitute the peripheral sector of the complex.</text>
</comment>
<comment type="subcellular location">
    <subcellularLocation>
        <location evidence="1">Cell inner membrane</location>
        <topology evidence="1">Peripheral membrane protein</topology>
        <orientation evidence="1">Cytoplasmic side</orientation>
    </subcellularLocation>
</comment>
<comment type="similarity">
    <text evidence="1">Belongs to the complex I 20 kDa subunit family.</text>
</comment>
<dbReference type="EC" id="7.1.1.-" evidence="1"/>
<dbReference type="EMBL" id="CP000133">
    <property type="protein sequence ID" value="ABC91331.1"/>
    <property type="molecule type" value="Genomic_DNA"/>
</dbReference>
<dbReference type="RefSeq" id="WP_011425809.1">
    <property type="nucleotide sequence ID" value="NC_007761.1"/>
</dbReference>
<dbReference type="SMR" id="Q2K755"/>
<dbReference type="KEGG" id="ret:RHE_CH02557"/>
<dbReference type="eggNOG" id="COG0377">
    <property type="taxonomic scope" value="Bacteria"/>
</dbReference>
<dbReference type="HOGENOM" id="CLU_055737_7_3_5"/>
<dbReference type="OrthoDB" id="9786737at2"/>
<dbReference type="Proteomes" id="UP000001936">
    <property type="component" value="Chromosome"/>
</dbReference>
<dbReference type="GO" id="GO:0005886">
    <property type="term" value="C:plasma membrane"/>
    <property type="evidence" value="ECO:0007669"/>
    <property type="project" value="UniProtKB-SubCell"/>
</dbReference>
<dbReference type="GO" id="GO:0045271">
    <property type="term" value="C:respiratory chain complex I"/>
    <property type="evidence" value="ECO:0007669"/>
    <property type="project" value="TreeGrafter"/>
</dbReference>
<dbReference type="GO" id="GO:0051539">
    <property type="term" value="F:4 iron, 4 sulfur cluster binding"/>
    <property type="evidence" value="ECO:0007669"/>
    <property type="project" value="UniProtKB-KW"/>
</dbReference>
<dbReference type="GO" id="GO:0005506">
    <property type="term" value="F:iron ion binding"/>
    <property type="evidence" value="ECO:0007669"/>
    <property type="project" value="UniProtKB-UniRule"/>
</dbReference>
<dbReference type="GO" id="GO:0008137">
    <property type="term" value="F:NADH dehydrogenase (ubiquinone) activity"/>
    <property type="evidence" value="ECO:0007669"/>
    <property type="project" value="InterPro"/>
</dbReference>
<dbReference type="GO" id="GO:0050136">
    <property type="term" value="F:NADH:ubiquinone reductase (non-electrogenic) activity"/>
    <property type="evidence" value="ECO:0007669"/>
    <property type="project" value="UniProtKB-UniRule"/>
</dbReference>
<dbReference type="GO" id="GO:0048038">
    <property type="term" value="F:quinone binding"/>
    <property type="evidence" value="ECO:0007669"/>
    <property type="project" value="UniProtKB-KW"/>
</dbReference>
<dbReference type="GO" id="GO:0009060">
    <property type="term" value="P:aerobic respiration"/>
    <property type="evidence" value="ECO:0007669"/>
    <property type="project" value="TreeGrafter"/>
</dbReference>
<dbReference type="GO" id="GO:0015990">
    <property type="term" value="P:electron transport coupled proton transport"/>
    <property type="evidence" value="ECO:0007669"/>
    <property type="project" value="TreeGrafter"/>
</dbReference>
<dbReference type="FunFam" id="3.40.50.12280:FF:000001">
    <property type="entry name" value="NADH-quinone oxidoreductase subunit B 2"/>
    <property type="match status" value="1"/>
</dbReference>
<dbReference type="Gene3D" id="3.40.50.12280">
    <property type="match status" value="1"/>
</dbReference>
<dbReference type="HAMAP" id="MF_01356">
    <property type="entry name" value="NDH1_NuoB"/>
    <property type="match status" value="1"/>
</dbReference>
<dbReference type="InterPro" id="IPR006137">
    <property type="entry name" value="NADH_UbQ_OxRdtase-like_20kDa"/>
</dbReference>
<dbReference type="InterPro" id="IPR006138">
    <property type="entry name" value="NADH_UQ_OxRdtase_20Kd_su"/>
</dbReference>
<dbReference type="NCBIfam" id="TIGR01957">
    <property type="entry name" value="nuoB_fam"/>
    <property type="match status" value="1"/>
</dbReference>
<dbReference type="NCBIfam" id="NF005012">
    <property type="entry name" value="PRK06411.1"/>
    <property type="match status" value="1"/>
</dbReference>
<dbReference type="PANTHER" id="PTHR11995">
    <property type="entry name" value="NADH DEHYDROGENASE"/>
    <property type="match status" value="1"/>
</dbReference>
<dbReference type="PANTHER" id="PTHR11995:SF14">
    <property type="entry name" value="NADH DEHYDROGENASE [UBIQUINONE] IRON-SULFUR PROTEIN 7, MITOCHONDRIAL"/>
    <property type="match status" value="1"/>
</dbReference>
<dbReference type="Pfam" id="PF01058">
    <property type="entry name" value="Oxidored_q6"/>
    <property type="match status" value="1"/>
</dbReference>
<dbReference type="SUPFAM" id="SSF56770">
    <property type="entry name" value="HydA/Nqo6-like"/>
    <property type="match status" value="1"/>
</dbReference>
<dbReference type="PROSITE" id="PS01150">
    <property type="entry name" value="COMPLEX1_20K"/>
    <property type="match status" value="1"/>
</dbReference>
<organism>
    <name type="scientific">Rhizobium etli (strain ATCC 51251 / DSM 11541 / JCM 21823 / NBRC 15573 / CFN 42)</name>
    <dbReference type="NCBI Taxonomy" id="347834"/>
    <lineage>
        <taxon>Bacteria</taxon>
        <taxon>Pseudomonadati</taxon>
        <taxon>Pseudomonadota</taxon>
        <taxon>Alphaproteobacteria</taxon>
        <taxon>Hyphomicrobiales</taxon>
        <taxon>Rhizobiaceae</taxon>
        <taxon>Rhizobium/Agrobacterium group</taxon>
        <taxon>Rhizobium</taxon>
    </lineage>
</organism>